<proteinExistence type="inferred from homology"/>
<dbReference type="EMBL" id="CP000034">
    <property type="protein sequence ID" value="ABB63461.1"/>
    <property type="molecule type" value="Genomic_DNA"/>
</dbReference>
<dbReference type="RefSeq" id="WP_001118930.1">
    <property type="nucleotide sequence ID" value="NC_007606.1"/>
</dbReference>
<dbReference type="RefSeq" id="YP_404952.1">
    <property type="nucleotide sequence ID" value="NC_007606.1"/>
</dbReference>
<dbReference type="SMR" id="Q32B44"/>
<dbReference type="STRING" id="300267.SDY_3483"/>
<dbReference type="EnsemblBacteria" id="ABB63461">
    <property type="protein sequence ID" value="ABB63461"/>
    <property type="gene ID" value="SDY_3483"/>
</dbReference>
<dbReference type="GeneID" id="93778680"/>
<dbReference type="KEGG" id="sdy:SDY_3483"/>
<dbReference type="PATRIC" id="fig|300267.13.peg.4136"/>
<dbReference type="HOGENOM" id="CLU_139869_0_1_6"/>
<dbReference type="Proteomes" id="UP000002716">
    <property type="component" value="Chromosome"/>
</dbReference>
<dbReference type="GO" id="GO:0005737">
    <property type="term" value="C:cytoplasm"/>
    <property type="evidence" value="ECO:0007669"/>
    <property type="project" value="UniProtKB-ARBA"/>
</dbReference>
<dbReference type="GO" id="GO:0015935">
    <property type="term" value="C:small ribosomal subunit"/>
    <property type="evidence" value="ECO:0007669"/>
    <property type="project" value="TreeGrafter"/>
</dbReference>
<dbReference type="GO" id="GO:0019843">
    <property type="term" value="F:rRNA binding"/>
    <property type="evidence" value="ECO:0007669"/>
    <property type="project" value="UniProtKB-UniRule"/>
</dbReference>
<dbReference type="GO" id="GO:0003735">
    <property type="term" value="F:structural constituent of ribosome"/>
    <property type="evidence" value="ECO:0007669"/>
    <property type="project" value="InterPro"/>
</dbReference>
<dbReference type="GO" id="GO:0006412">
    <property type="term" value="P:translation"/>
    <property type="evidence" value="ECO:0007669"/>
    <property type="project" value="UniProtKB-UniRule"/>
</dbReference>
<dbReference type="FunFam" id="1.10.287.1480:FF:000001">
    <property type="entry name" value="30S ribosomal protein S14"/>
    <property type="match status" value="1"/>
</dbReference>
<dbReference type="Gene3D" id="1.10.287.1480">
    <property type="match status" value="1"/>
</dbReference>
<dbReference type="HAMAP" id="MF_00537">
    <property type="entry name" value="Ribosomal_uS14_1"/>
    <property type="match status" value="1"/>
</dbReference>
<dbReference type="InterPro" id="IPR001209">
    <property type="entry name" value="Ribosomal_uS14"/>
</dbReference>
<dbReference type="InterPro" id="IPR023036">
    <property type="entry name" value="Ribosomal_uS14_bac/plastid"/>
</dbReference>
<dbReference type="InterPro" id="IPR018271">
    <property type="entry name" value="Ribosomal_uS14_CS"/>
</dbReference>
<dbReference type="NCBIfam" id="NF006477">
    <property type="entry name" value="PRK08881.1"/>
    <property type="match status" value="1"/>
</dbReference>
<dbReference type="PANTHER" id="PTHR19836">
    <property type="entry name" value="30S RIBOSOMAL PROTEIN S14"/>
    <property type="match status" value="1"/>
</dbReference>
<dbReference type="PANTHER" id="PTHR19836:SF19">
    <property type="entry name" value="SMALL RIBOSOMAL SUBUNIT PROTEIN US14M"/>
    <property type="match status" value="1"/>
</dbReference>
<dbReference type="Pfam" id="PF00253">
    <property type="entry name" value="Ribosomal_S14"/>
    <property type="match status" value="1"/>
</dbReference>
<dbReference type="SUPFAM" id="SSF57716">
    <property type="entry name" value="Glucocorticoid receptor-like (DNA-binding domain)"/>
    <property type="match status" value="1"/>
</dbReference>
<dbReference type="PROSITE" id="PS00527">
    <property type="entry name" value="RIBOSOMAL_S14"/>
    <property type="match status" value="1"/>
</dbReference>
<feature type="chain" id="PRO_1000128589" description="Small ribosomal subunit protein uS14">
    <location>
        <begin position="1"/>
        <end position="101"/>
    </location>
</feature>
<protein>
    <recommendedName>
        <fullName evidence="1">Small ribosomal subunit protein uS14</fullName>
    </recommendedName>
    <alternativeName>
        <fullName evidence="2">30S ribosomal protein S14</fullName>
    </alternativeName>
</protein>
<keyword id="KW-1185">Reference proteome</keyword>
<keyword id="KW-0687">Ribonucleoprotein</keyword>
<keyword id="KW-0689">Ribosomal protein</keyword>
<keyword id="KW-0694">RNA-binding</keyword>
<keyword id="KW-0699">rRNA-binding</keyword>
<sequence length="101" mass="11580">MAKQSMKAREVKRVALADKYFAKRAELKAIISDVNASDEDRWNAVLKLQTLPRDSSPSRQRNRCRQTGRPHGFLRKFGLSRIKVREAAMRGEIPGLKKASW</sequence>
<accession>Q32B44</accession>
<reference key="1">
    <citation type="journal article" date="2005" name="Nucleic Acids Res.">
        <title>Genome dynamics and diversity of Shigella species, the etiologic agents of bacillary dysentery.</title>
        <authorList>
            <person name="Yang F."/>
            <person name="Yang J."/>
            <person name="Zhang X."/>
            <person name="Chen L."/>
            <person name="Jiang Y."/>
            <person name="Yan Y."/>
            <person name="Tang X."/>
            <person name="Wang J."/>
            <person name="Xiong Z."/>
            <person name="Dong J."/>
            <person name="Xue Y."/>
            <person name="Zhu Y."/>
            <person name="Xu X."/>
            <person name="Sun L."/>
            <person name="Chen S."/>
            <person name="Nie H."/>
            <person name="Peng J."/>
            <person name="Xu J."/>
            <person name="Wang Y."/>
            <person name="Yuan Z."/>
            <person name="Wen Y."/>
            <person name="Yao Z."/>
            <person name="Shen Y."/>
            <person name="Qiang B."/>
            <person name="Hou Y."/>
            <person name="Yu J."/>
            <person name="Jin Q."/>
        </authorList>
    </citation>
    <scope>NUCLEOTIDE SEQUENCE [LARGE SCALE GENOMIC DNA]</scope>
    <source>
        <strain>Sd197</strain>
    </source>
</reference>
<comment type="function">
    <text evidence="1">Binds 16S rRNA, required for the assembly of 30S particles and may also be responsible for determining the conformation of the 16S rRNA at the A site.</text>
</comment>
<comment type="subunit">
    <text evidence="1">Part of the 30S ribosomal subunit. Contacts proteins S3 and S10.</text>
</comment>
<comment type="similarity">
    <text evidence="1">Belongs to the universal ribosomal protein uS14 family.</text>
</comment>
<name>RS14_SHIDS</name>
<evidence type="ECO:0000255" key="1">
    <source>
        <dbReference type="HAMAP-Rule" id="MF_00537"/>
    </source>
</evidence>
<evidence type="ECO:0000305" key="2"/>
<gene>
    <name evidence="1" type="primary">rpsN</name>
    <name type="ordered locus">SDY_3483</name>
</gene>
<organism>
    <name type="scientific">Shigella dysenteriae serotype 1 (strain Sd197)</name>
    <dbReference type="NCBI Taxonomy" id="300267"/>
    <lineage>
        <taxon>Bacteria</taxon>
        <taxon>Pseudomonadati</taxon>
        <taxon>Pseudomonadota</taxon>
        <taxon>Gammaproteobacteria</taxon>
        <taxon>Enterobacterales</taxon>
        <taxon>Enterobacteriaceae</taxon>
        <taxon>Shigella</taxon>
    </lineage>
</organism>